<comment type="similarity">
    <text evidence="3">Belongs to the ANKRD34 family.</text>
</comment>
<organism>
    <name type="scientific">Homo sapiens</name>
    <name type="common">Human</name>
    <dbReference type="NCBI Taxonomy" id="9606"/>
    <lineage>
        <taxon>Eukaryota</taxon>
        <taxon>Metazoa</taxon>
        <taxon>Chordata</taxon>
        <taxon>Craniata</taxon>
        <taxon>Vertebrata</taxon>
        <taxon>Euteleostomi</taxon>
        <taxon>Mammalia</taxon>
        <taxon>Eutheria</taxon>
        <taxon>Euarchontoglires</taxon>
        <taxon>Primates</taxon>
        <taxon>Haplorrhini</taxon>
        <taxon>Catarrhini</taxon>
        <taxon>Hominidae</taxon>
        <taxon>Homo</taxon>
    </lineage>
</organism>
<accession>P0C6C1</accession>
<accession>H3BNM1</accession>
<sequence>MMDDDTELRTDGNSLLKAVWLGRLRLTRLLLEGGAYINESNDKGETALMVACITKHVDQQSISKSKMVKYLLDNRADPNIQDKSGKTALIHACIRRAGGEVVSLLLENGADPSLEDRTGASALVYAINADDKDALKHLLDACKAKGKEVIIITTDKSSSGTKTTKQYLNVPPSPKVEDRHSPPLCASPSDIELKALGLDSPLTEKEDDFFSLQAGHPSSCNTSKAVNEPGSPTRKVSNLKRARLPQLKRLQSEPWGLIAPSVLAASTRQDETHGASTDNEVIKSISDISFPKRGPLSRTNSIDSKDPTLFHTVTEQVLKIPVSSAPASWKAAYEKGQAPHPRLARRGTLPVDQEKCGMGPSGPSALKEPASLKWLENDLYDLDIQPGPDPPNSISLESGKGPLDRKKLNSSHLSLFHGSRESLDTVPSTSPSSARRRPPHLLERRGSGTLLLDRISHTRPGFLPPLNVNLNPPIPDIRSSSKPSCSLASGLKSMVPVAPSSPKRVDLRSKKKLLRRHSMQIEQMKQLSDFEEIMT</sequence>
<evidence type="ECO:0000250" key="1">
    <source>
        <dbReference type="UniProtKB" id="Q8BLB8"/>
    </source>
</evidence>
<evidence type="ECO:0000256" key="2">
    <source>
        <dbReference type="SAM" id="MobiDB-lite"/>
    </source>
</evidence>
<evidence type="ECO:0000305" key="3"/>
<proteinExistence type="evidence at protein level"/>
<name>AN34C_HUMAN</name>
<reference key="1">
    <citation type="journal article" date="2006" name="Nature">
        <title>Analysis of the DNA sequence and duplication history of human chromosome 15.</title>
        <authorList>
            <person name="Zody M.C."/>
            <person name="Garber M."/>
            <person name="Sharpe T."/>
            <person name="Young S.K."/>
            <person name="Rowen L."/>
            <person name="O'Neill K."/>
            <person name="Whittaker C.A."/>
            <person name="Kamal M."/>
            <person name="Chang J.L."/>
            <person name="Cuomo C.A."/>
            <person name="Dewar K."/>
            <person name="FitzGerald M.G."/>
            <person name="Kodira C.D."/>
            <person name="Madan A."/>
            <person name="Qin S."/>
            <person name="Yang X."/>
            <person name="Abbasi N."/>
            <person name="Abouelleil A."/>
            <person name="Arachchi H.M."/>
            <person name="Baradarani L."/>
            <person name="Birditt B."/>
            <person name="Bloom S."/>
            <person name="Bloom T."/>
            <person name="Borowsky M.L."/>
            <person name="Burke J."/>
            <person name="Butler J."/>
            <person name="Cook A."/>
            <person name="DeArellano K."/>
            <person name="DeCaprio D."/>
            <person name="Dorris L. III"/>
            <person name="Dors M."/>
            <person name="Eichler E.E."/>
            <person name="Engels R."/>
            <person name="Fahey J."/>
            <person name="Fleetwood P."/>
            <person name="Friedman C."/>
            <person name="Gearin G."/>
            <person name="Hall J.L."/>
            <person name="Hensley G."/>
            <person name="Johnson E."/>
            <person name="Jones C."/>
            <person name="Kamat A."/>
            <person name="Kaur A."/>
            <person name="Locke D.P."/>
            <person name="Madan A."/>
            <person name="Munson G."/>
            <person name="Jaffe D.B."/>
            <person name="Lui A."/>
            <person name="Macdonald P."/>
            <person name="Mauceli E."/>
            <person name="Naylor J.W."/>
            <person name="Nesbitt R."/>
            <person name="Nicol R."/>
            <person name="O'Leary S.B."/>
            <person name="Ratcliffe A."/>
            <person name="Rounsley S."/>
            <person name="She X."/>
            <person name="Sneddon K.M.B."/>
            <person name="Stewart S."/>
            <person name="Sougnez C."/>
            <person name="Stone S.M."/>
            <person name="Topham K."/>
            <person name="Vincent D."/>
            <person name="Wang S."/>
            <person name="Zimmer A.R."/>
            <person name="Birren B.W."/>
            <person name="Hood L."/>
            <person name="Lander E.S."/>
            <person name="Nusbaum C."/>
        </authorList>
    </citation>
    <scope>NUCLEOTIDE SEQUENCE [LARGE SCALE GENOMIC DNA]</scope>
</reference>
<gene>
    <name type="primary">ANKRD34C</name>
</gene>
<feature type="chain" id="PRO_0000319104" description="Ankyrin repeat domain-containing protein 34C">
    <location>
        <begin position="1"/>
        <end position="535"/>
    </location>
</feature>
<feature type="repeat" description="ANK 1">
    <location>
        <begin position="10"/>
        <end position="39"/>
    </location>
</feature>
<feature type="repeat" description="ANK 2">
    <location>
        <begin position="43"/>
        <end position="80"/>
    </location>
</feature>
<feature type="repeat" description="ANK 3">
    <location>
        <begin position="84"/>
        <end position="114"/>
    </location>
</feature>
<feature type="repeat" description="ANK 4">
    <location>
        <begin position="118"/>
        <end position="147"/>
    </location>
</feature>
<feature type="region of interest" description="Disordered" evidence="2">
    <location>
        <begin position="159"/>
        <end position="181"/>
    </location>
</feature>
<feature type="region of interest" description="Disordered" evidence="2">
    <location>
        <begin position="214"/>
        <end position="237"/>
    </location>
</feature>
<feature type="region of interest" description="Disordered" evidence="2">
    <location>
        <begin position="381"/>
        <end position="444"/>
    </location>
</feature>
<feature type="compositionally biased region" description="Polar residues" evidence="2">
    <location>
        <begin position="216"/>
        <end position="225"/>
    </location>
</feature>
<feature type="modified residue" description="Phosphoserine" evidence="1">
    <location>
        <position position="301"/>
    </location>
</feature>
<feature type="modified residue" description="Phosphoserine" evidence="1">
    <location>
        <position position="447"/>
    </location>
</feature>
<feature type="sequence variant" id="VAR_038953" description="In dbSNP:rs410400.">
    <original>P</original>
    <variation>R</variation>
    <location>
        <position position="369"/>
    </location>
</feature>
<feature type="sequence variant" id="VAR_038954" description="In dbSNP:rs449340.">
    <original>P</original>
    <variation>H</variation>
    <location>
        <position position="427"/>
    </location>
</feature>
<feature type="sequence variant" id="VAR_038955" description="In dbSNP:rs422777.">
    <original>L</original>
    <variation>I</variation>
    <location>
        <position position="442"/>
    </location>
</feature>
<keyword id="KW-0040">ANK repeat</keyword>
<keyword id="KW-0597">Phosphoprotein</keyword>
<keyword id="KW-1267">Proteomics identification</keyword>
<keyword id="KW-1185">Reference proteome</keyword>
<keyword id="KW-0677">Repeat</keyword>
<protein>
    <recommendedName>
        <fullName>Ankyrin repeat domain-containing protein 34C</fullName>
    </recommendedName>
</protein>
<dbReference type="EMBL" id="AC011797">
    <property type="status" value="NOT_ANNOTATED_CDS"/>
    <property type="molecule type" value="Genomic_DNA"/>
</dbReference>
<dbReference type="CCDS" id="CCDS53965.1"/>
<dbReference type="RefSeq" id="NP_001139813.1">
    <property type="nucleotide sequence ID" value="NM_001146341.2"/>
</dbReference>
<dbReference type="SMR" id="P0C6C1"/>
<dbReference type="BioGRID" id="133634">
    <property type="interactions" value="35"/>
</dbReference>
<dbReference type="FunCoup" id="P0C6C1">
    <property type="interactions" value="7"/>
</dbReference>
<dbReference type="STRING" id="9606.ENSP00000401089"/>
<dbReference type="GlyCosmos" id="P0C6C1">
    <property type="glycosylation" value="1 site, 1 glycan"/>
</dbReference>
<dbReference type="GlyGen" id="P0C6C1">
    <property type="glycosylation" value="2 sites, 1 O-linked glycan (2 sites)"/>
</dbReference>
<dbReference type="iPTMnet" id="P0C6C1"/>
<dbReference type="PhosphoSitePlus" id="P0C6C1"/>
<dbReference type="BioMuta" id="ANKRD34C"/>
<dbReference type="DMDM" id="519668660"/>
<dbReference type="jPOST" id="P0C6C1"/>
<dbReference type="MassIVE" id="P0C6C1"/>
<dbReference type="PaxDb" id="9606-ENSP00000401089"/>
<dbReference type="PeptideAtlas" id="P0C6C1"/>
<dbReference type="ProteomicsDB" id="41238"/>
<dbReference type="ProteomicsDB" id="52326"/>
<dbReference type="Antibodypedia" id="68063">
    <property type="antibodies" value="62 antibodies from 10 providers"/>
</dbReference>
<dbReference type="DNASU" id="390616"/>
<dbReference type="Ensembl" id="ENST00000421388.4">
    <property type="protein sequence ID" value="ENSP00000401089.2"/>
    <property type="gene ID" value="ENSG00000235711.5"/>
</dbReference>
<dbReference type="GeneID" id="390616"/>
<dbReference type="KEGG" id="hsa:390616"/>
<dbReference type="MANE-Select" id="ENST00000421388.4">
    <property type="protein sequence ID" value="ENSP00000401089.2"/>
    <property type="RefSeq nucleotide sequence ID" value="NM_001146341.2"/>
    <property type="RefSeq protein sequence ID" value="NP_001139813.1"/>
</dbReference>
<dbReference type="UCSC" id="uc059mho.1">
    <property type="organism name" value="human"/>
</dbReference>
<dbReference type="AGR" id="HGNC:33888"/>
<dbReference type="CTD" id="390616"/>
<dbReference type="GeneCards" id="ANKRD34C"/>
<dbReference type="HGNC" id="HGNC:33888">
    <property type="gene designation" value="ANKRD34C"/>
</dbReference>
<dbReference type="HPA" id="ENSG00000235711">
    <property type="expression patterns" value="Tissue enhanced (brain)"/>
</dbReference>
<dbReference type="neXtProt" id="NX_P0C6C1"/>
<dbReference type="OpenTargets" id="ENSG00000235711"/>
<dbReference type="VEuPathDB" id="HostDB:ENSG00000235711"/>
<dbReference type="eggNOG" id="ENOG502QW3G">
    <property type="taxonomic scope" value="Eukaryota"/>
</dbReference>
<dbReference type="GeneTree" id="ENSGT00880000138051"/>
<dbReference type="HOGENOM" id="CLU_042805_0_0_1"/>
<dbReference type="InParanoid" id="P0C6C1"/>
<dbReference type="OMA" id="EQQNTVF"/>
<dbReference type="OrthoDB" id="341259at2759"/>
<dbReference type="PAN-GO" id="P0C6C1">
    <property type="GO annotations" value="0 GO annotations based on evolutionary models"/>
</dbReference>
<dbReference type="PhylomeDB" id="P0C6C1"/>
<dbReference type="TreeFam" id="TF331155"/>
<dbReference type="PathwayCommons" id="P0C6C1"/>
<dbReference type="BioGRID-ORCS" id="390616">
    <property type="hits" value="9 hits in 1134 CRISPR screens"/>
</dbReference>
<dbReference type="GenomeRNAi" id="390616"/>
<dbReference type="Pharos" id="P0C6C1">
    <property type="development level" value="Tdark"/>
</dbReference>
<dbReference type="PRO" id="PR:P0C6C1"/>
<dbReference type="Proteomes" id="UP000005640">
    <property type="component" value="Chromosome 15"/>
</dbReference>
<dbReference type="RNAct" id="P0C6C1">
    <property type="molecule type" value="protein"/>
</dbReference>
<dbReference type="Bgee" id="ENSG00000235711">
    <property type="expression patterns" value="Expressed in male germ line stem cell (sensu Vertebrata) in testis and 67 other cell types or tissues"/>
</dbReference>
<dbReference type="GO" id="GO:0071546">
    <property type="term" value="C:pi-body"/>
    <property type="evidence" value="ECO:0000318"/>
    <property type="project" value="GO_Central"/>
</dbReference>
<dbReference type="Gene3D" id="1.25.40.20">
    <property type="entry name" value="Ankyrin repeat-containing domain"/>
    <property type="match status" value="1"/>
</dbReference>
<dbReference type="InterPro" id="IPR042637">
    <property type="entry name" value="AN34A/B/C"/>
</dbReference>
<dbReference type="InterPro" id="IPR002110">
    <property type="entry name" value="Ankyrin_rpt"/>
</dbReference>
<dbReference type="InterPro" id="IPR036770">
    <property type="entry name" value="Ankyrin_rpt-contain_sf"/>
</dbReference>
<dbReference type="PANTHER" id="PTHR24156">
    <property type="entry name" value="ANK_REP_REGION DOMAIN-CONTAINING PROTEIN"/>
    <property type="match status" value="1"/>
</dbReference>
<dbReference type="PANTHER" id="PTHR24156:SF6">
    <property type="entry name" value="ANKYRIN REPEAT DOMAIN 34C"/>
    <property type="match status" value="1"/>
</dbReference>
<dbReference type="Pfam" id="PF12796">
    <property type="entry name" value="Ank_2"/>
    <property type="match status" value="1"/>
</dbReference>
<dbReference type="SMART" id="SM00248">
    <property type="entry name" value="ANK"/>
    <property type="match status" value="4"/>
</dbReference>
<dbReference type="SUPFAM" id="SSF48403">
    <property type="entry name" value="Ankyrin repeat"/>
    <property type="match status" value="1"/>
</dbReference>
<dbReference type="PROSITE" id="PS50297">
    <property type="entry name" value="ANK_REP_REGION"/>
    <property type="match status" value="1"/>
</dbReference>
<dbReference type="PROSITE" id="PS50088">
    <property type="entry name" value="ANK_REPEAT"/>
    <property type="match status" value="2"/>
</dbReference>